<proteinExistence type="inferred from homology"/>
<feature type="chain" id="PRO_1000047570" description="Glutamate racemase">
    <location>
        <begin position="1"/>
        <end position="269"/>
    </location>
</feature>
<feature type="active site" description="Proton donor/acceptor" evidence="1">
    <location>
        <position position="78"/>
    </location>
</feature>
<feature type="active site" description="Proton donor/acceptor" evidence="1">
    <location>
        <position position="189"/>
    </location>
</feature>
<feature type="binding site" evidence="1">
    <location>
        <begin position="14"/>
        <end position="15"/>
    </location>
    <ligand>
        <name>substrate</name>
    </ligand>
</feature>
<feature type="binding site" evidence="1">
    <location>
        <begin position="46"/>
        <end position="47"/>
    </location>
    <ligand>
        <name>substrate</name>
    </ligand>
</feature>
<feature type="binding site" evidence="1">
    <location>
        <begin position="79"/>
        <end position="80"/>
    </location>
    <ligand>
        <name>substrate</name>
    </ligand>
</feature>
<feature type="binding site" evidence="1">
    <location>
        <begin position="190"/>
        <end position="191"/>
    </location>
    <ligand>
        <name>substrate</name>
    </ligand>
</feature>
<protein>
    <recommendedName>
        <fullName evidence="1">Glutamate racemase</fullName>
        <ecNumber evidence="1">5.1.1.3</ecNumber>
    </recommendedName>
</protein>
<comment type="function">
    <text evidence="1">Provides the (R)-glutamate required for cell wall biosynthesis.</text>
</comment>
<comment type="catalytic activity">
    <reaction evidence="1">
        <text>L-glutamate = D-glutamate</text>
        <dbReference type="Rhea" id="RHEA:12813"/>
        <dbReference type="ChEBI" id="CHEBI:29985"/>
        <dbReference type="ChEBI" id="CHEBI:29986"/>
        <dbReference type="EC" id="5.1.1.3"/>
    </reaction>
</comment>
<comment type="pathway">
    <text evidence="1">Cell wall biogenesis; peptidoglycan biosynthesis.</text>
</comment>
<comment type="similarity">
    <text evidence="1">Belongs to the aspartate/glutamate racemases family.</text>
</comment>
<accession>A5UFH0</accession>
<gene>
    <name evidence="1" type="primary">murI</name>
    <name type="ordered locus">CGSHiGG_02440</name>
</gene>
<evidence type="ECO:0000255" key="1">
    <source>
        <dbReference type="HAMAP-Rule" id="MF_00258"/>
    </source>
</evidence>
<organism>
    <name type="scientific">Haemophilus influenzae (strain PittGG)</name>
    <dbReference type="NCBI Taxonomy" id="374931"/>
    <lineage>
        <taxon>Bacteria</taxon>
        <taxon>Pseudomonadati</taxon>
        <taxon>Pseudomonadota</taxon>
        <taxon>Gammaproteobacteria</taxon>
        <taxon>Pasteurellales</taxon>
        <taxon>Pasteurellaceae</taxon>
        <taxon>Haemophilus</taxon>
    </lineage>
</organism>
<dbReference type="EC" id="5.1.1.3" evidence="1"/>
<dbReference type="EMBL" id="CP000672">
    <property type="protein sequence ID" value="ABQ99525.1"/>
    <property type="molecule type" value="Genomic_DNA"/>
</dbReference>
<dbReference type="SMR" id="A5UFH0"/>
<dbReference type="KEGG" id="hiq:CGSHiGG_02440"/>
<dbReference type="HOGENOM" id="CLU_052344_2_0_6"/>
<dbReference type="UniPathway" id="UPA00219"/>
<dbReference type="Proteomes" id="UP000001990">
    <property type="component" value="Chromosome"/>
</dbReference>
<dbReference type="GO" id="GO:0008881">
    <property type="term" value="F:glutamate racemase activity"/>
    <property type="evidence" value="ECO:0007669"/>
    <property type="project" value="UniProtKB-UniRule"/>
</dbReference>
<dbReference type="GO" id="GO:0071555">
    <property type="term" value="P:cell wall organization"/>
    <property type="evidence" value="ECO:0007669"/>
    <property type="project" value="UniProtKB-KW"/>
</dbReference>
<dbReference type="GO" id="GO:0009252">
    <property type="term" value="P:peptidoglycan biosynthetic process"/>
    <property type="evidence" value="ECO:0007669"/>
    <property type="project" value="UniProtKB-UniRule"/>
</dbReference>
<dbReference type="GO" id="GO:0008360">
    <property type="term" value="P:regulation of cell shape"/>
    <property type="evidence" value="ECO:0007669"/>
    <property type="project" value="UniProtKB-KW"/>
</dbReference>
<dbReference type="FunFam" id="3.40.50.1860:FF:000001">
    <property type="entry name" value="Glutamate racemase"/>
    <property type="match status" value="1"/>
</dbReference>
<dbReference type="Gene3D" id="3.40.50.1860">
    <property type="match status" value="2"/>
</dbReference>
<dbReference type="HAMAP" id="MF_00258">
    <property type="entry name" value="Glu_racemase"/>
    <property type="match status" value="1"/>
</dbReference>
<dbReference type="InterPro" id="IPR015942">
    <property type="entry name" value="Asp/Glu/hydantoin_racemase"/>
</dbReference>
<dbReference type="InterPro" id="IPR001920">
    <property type="entry name" value="Asp/Glu_race"/>
</dbReference>
<dbReference type="InterPro" id="IPR018187">
    <property type="entry name" value="Asp/Glu_racemase_AS_1"/>
</dbReference>
<dbReference type="InterPro" id="IPR033134">
    <property type="entry name" value="Asp/Glu_racemase_AS_2"/>
</dbReference>
<dbReference type="InterPro" id="IPR004391">
    <property type="entry name" value="Glu_race"/>
</dbReference>
<dbReference type="NCBIfam" id="TIGR00067">
    <property type="entry name" value="glut_race"/>
    <property type="match status" value="1"/>
</dbReference>
<dbReference type="PANTHER" id="PTHR21198">
    <property type="entry name" value="GLUTAMATE RACEMASE"/>
    <property type="match status" value="1"/>
</dbReference>
<dbReference type="PANTHER" id="PTHR21198:SF2">
    <property type="entry name" value="GLUTAMATE RACEMASE"/>
    <property type="match status" value="1"/>
</dbReference>
<dbReference type="Pfam" id="PF01177">
    <property type="entry name" value="Asp_Glu_race"/>
    <property type="match status" value="1"/>
</dbReference>
<dbReference type="SUPFAM" id="SSF53681">
    <property type="entry name" value="Aspartate/glutamate racemase"/>
    <property type="match status" value="2"/>
</dbReference>
<dbReference type="PROSITE" id="PS00923">
    <property type="entry name" value="ASP_GLU_RACEMASE_1"/>
    <property type="match status" value="1"/>
</dbReference>
<dbReference type="PROSITE" id="PS00924">
    <property type="entry name" value="ASP_GLU_RACEMASE_2"/>
    <property type="match status" value="1"/>
</dbReference>
<reference key="1">
    <citation type="journal article" date="2007" name="Genome Biol.">
        <title>Characterization and modeling of the Haemophilus influenzae core and supragenomes based on the complete genomic sequences of Rd and 12 clinical nontypeable strains.</title>
        <authorList>
            <person name="Hogg J.S."/>
            <person name="Hu F.Z."/>
            <person name="Janto B."/>
            <person name="Boissy R."/>
            <person name="Hayes J."/>
            <person name="Keefe R."/>
            <person name="Post J.C."/>
            <person name="Ehrlich G.D."/>
        </authorList>
    </citation>
    <scope>NUCLEOTIDE SEQUENCE [LARGE SCALE GENOMIC DNA]</scope>
    <source>
        <strain>PittGG</strain>
    </source>
</reference>
<sequence length="269" mass="30502">MDKKEKRPTVLFFDSGVGGFSVYREAKKLLPNWHYLYCFDNAGFPYSERKEESIIHRTLAACQLINQRYPLDAIVIACNTASTVVLPPLRAAFDIPIIGTVPAIKPASEITKTKHIGLLATKGTVKRHYIDELIDKFAQDCIVERLGTTKLVEIAEQKIRGHSVDLISLKDELSSWAGMADLDTLVLGCTHFPLIKDEIQLCLPQVKYFMDPSAAIAKRIKYLLDDKNLQAQNEKYNQMFCTAHFPEESQFKKALHLWGFESLEVIKID</sequence>
<keyword id="KW-0133">Cell shape</keyword>
<keyword id="KW-0961">Cell wall biogenesis/degradation</keyword>
<keyword id="KW-0413">Isomerase</keyword>
<keyword id="KW-0573">Peptidoglycan synthesis</keyword>
<name>MURI_HAEIG</name>